<dbReference type="ConoServer" id="5862">
    <property type="toxin name" value="Pc16c"/>
</dbReference>
<dbReference type="GO" id="GO:0005576">
    <property type="term" value="C:extracellular region"/>
    <property type="evidence" value="ECO:0007669"/>
    <property type="project" value="UniProtKB-SubCell"/>
</dbReference>
<organism>
    <name type="scientific">Conus pictus</name>
    <name type="common">Cone snail</name>
    <dbReference type="NCBI Taxonomy" id="1042615"/>
    <lineage>
        <taxon>Eukaryota</taxon>
        <taxon>Metazoa</taxon>
        <taxon>Spiralia</taxon>
        <taxon>Lophotrochozoa</taxon>
        <taxon>Mollusca</taxon>
        <taxon>Gastropoda</taxon>
        <taxon>Caenogastropoda</taxon>
        <taxon>Neogastropoda</taxon>
        <taxon>Conoidea</taxon>
        <taxon>Conidae</taxon>
        <taxon>Conus</taxon>
        <taxon>Sciteconus</taxon>
    </lineage>
</organism>
<keyword id="KW-0027">Amidation</keyword>
<keyword id="KW-0903">Direct protein sequencing</keyword>
<keyword id="KW-1015">Disulfide bond</keyword>
<keyword id="KW-0964">Secreted</keyword>
<reference key="1">
    <citation type="journal article" date="2013" name="Peptides">
        <title>Unraveling the peptidome of the South African cone snails Conus pictus and Conus natalis.</title>
        <authorList>
            <person name="Peigneur S."/>
            <person name="Van Der Haegen A."/>
            <person name="Moller C."/>
            <person name="Waelkens E."/>
            <person name="Diego-Garcia E."/>
            <person name="Mari F."/>
            <person name="Naude R."/>
            <person name="Tytgat J."/>
        </authorList>
    </citation>
    <scope>PROTEIN SEQUENCE</scope>
    <scope>AMIDATION AT ASP-12</scope>
    <scope>MASS SPECTROMETRY</scope>
    <scope>SUBCELLULAR LOCATION</scope>
    <source>
        <tissue>Venom</tissue>
    </source>
</reference>
<proteinExistence type="evidence at protein level"/>
<protein>
    <recommendedName>
        <fullName>Conotoxin pc16c</fullName>
    </recommendedName>
</protein>
<evidence type="ECO:0000250" key="1">
    <source>
        <dbReference type="UniProtKB" id="P86942"/>
    </source>
</evidence>
<evidence type="ECO:0000269" key="2">
    <source>
    </source>
</evidence>
<evidence type="ECO:0000305" key="3"/>
<evidence type="ECO:0000305" key="4">
    <source>
    </source>
</evidence>
<sequence>SCSCQKHFSCCD</sequence>
<comment type="subcellular location">
    <subcellularLocation>
        <location evidence="2">Secreted</location>
    </subcellularLocation>
</comment>
<comment type="tissue specificity">
    <text evidence="4">Expressed by the venom duct.</text>
</comment>
<comment type="domain">
    <text evidence="3">The cysteine framework is XVI (C-C-CC).</text>
</comment>
<comment type="mass spectrometry">
    <text>monoisotopic.</text>
</comment>
<accession>P0DMA4</accession>
<feature type="peptide" id="PRO_0000424801" description="Conotoxin pc16c" evidence="2">
    <location>
        <begin position="1"/>
        <end position="12"/>
    </location>
</feature>
<feature type="modified residue" description="Aspartic acid 1-amide" evidence="2">
    <location>
        <position position="12"/>
    </location>
</feature>
<feature type="disulfide bond" evidence="1">
    <location>
        <begin position="2"/>
        <end position="10"/>
    </location>
</feature>
<feature type="disulfide bond" evidence="1">
    <location>
        <begin position="4"/>
        <end position="11"/>
    </location>
</feature>
<name>CUGC_CONPB</name>